<gene>
    <name evidence="6" type="primary">Ripor1</name>
    <name type="synonym">Fam65a</name>
</gene>
<feature type="chain" id="PRO_0000289112" description="Rho family-interacting cell polarization regulator 1">
    <location>
        <begin position="1"/>
        <end position="1217"/>
    </location>
</feature>
<feature type="region of interest" description="Disordered" evidence="4">
    <location>
        <begin position="371"/>
        <end position="413"/>
    </location>
</feature>
<feature type="region of interest" description="Disordered" evidence="4">
    <location>
        <begin position="565"/>
        <end position="762"/>
    </location>
</feature>
<feature type="region of interest" description="Disordered" evidence="4">
    <location>
        <begin position="850"/>
        <end position="874"/>
    </location>
</feature>
<feature type="coiled-coil region" evidence="3">
    <location>
        <begin position="83"/>
        <end position="112"/>
    </location>
</feature>
<feature type="coiled-coil region" evidence="3">
    <location>
        <begin position="786"/>
        <end position="828"/>
    </location>
</feature>
<feature type="compositionally biased region" description="Low complexity" evidence="4">
    <location>
        <begin position="376"/>
        <end position="391"/>
    </location>
</feature>
<feature type="compositionally biased region" description="Low complexity" evidence="4">
    <location>
        <begin position="400"/>
        <end position="413"/>
    </location>
</feature>
<feature type="compositionally biased region" description="Polar residues" evidence="4">
    <location>
        <begin position="579"/>
        <end position="594"/>
    </location>
</feature>
<feature type="compositionally biased region" description="Low complexity" evidence="4">
    <location>
        <begin position="595"/>
        <end position="649"/>
    </location>
</feature>
<feature type="compositionally biased region" description="Polar residues" evidence="4">
    <location>
        <begin position="650"/>
        <end position="661"/>
    </location>
</feature>
<feature type="compositionally biased region" description="Low complexity" evidence="4">
    <location>
        <begin position="664"/>
        <end position="695"/>
    </location>
</feature>
<feature type="compositionally biased region" description="Polar residues" evidence="4">
    <location>
        <begin position="720"/>
        <end position="729"/>
    </location>
</feature>
<feature type="compositionally biased region" description="Acidic residues" evidence="4">
    <location>
        <begin position="852"/>
        <end position="861"/>
    </location>
</feature>
<feature type="modified residue" description="Phosphoserine" evidence="7">
    <location>
        <position position="22"/>
    </location>
</feature>
<feature type="modified residue" description="Phosphoserine" evidence="2">
    <location>
        <position position="345"/>
    </location>
</feature>
<feature type="modified residue" description="Phosphoserine" evidence="7">
    <location>
        <position position="347"/>
    </location>
</feature>
<feature type="modified residue" description="Phosphothreonine" evidence="2">
    <location>
        <position position="351"/>
    </location>
</feature>
<feature type="modified residue" description="Phosphoserine" evidence="7">
    <location>
        <position position="452"/>
    </location>
</feature>
<feature type="modified residue" description="Phosphoserine" evidence="7">
    <location>
        <position position="455"/>
    </location>
</feature>
<feature type="modified residue" description="Phosphoserine" evidence="7">
    <location>
        <position position="742"/>
    </location>
</feature>
<feature type="modified residue" description="Phosphoserine" evidence="1">
    <location>
        <position position="868"/>
    </location>
</feature>
<feature type="modified residue" description="Phosphoserine" evidence="1">
    <location>
        <position position="869"/>
    </location>
</feature>
<proteinExistence type="evidence at protein level"/>
<accession>Q4FZU8</accession>
<keyword id="KW-0175">Coiled coil</keyword>
<keyword id="KW-0963">Cytoplasm</keyword>
<keyword id="KW-0333">Golgi apparatus</keyword>
<keyword id="KW-0597">Phosphoprotein</keyword>
<keyword id="KW-1185">Reference proteome</keyword>
<sequence>MMSLSVRPQRRLLSARVSRSQSFAGVLGSQERGPRNFTVFSPPGPQRKPLVLSRVSRMFSVAHPAPKVPQPERLDLVYAALKRGLTAYLEVHQQEQEKLQRQIKESKRNSRLGFLYDLDKQVKSIERFLRRLEFHASKIDELYEAYCVQRRLRDGAYNMVRAYSTGSPGSREARDSLAEATRGHREYTESMCLLENELEAQLGEFHLRMKGLAGFARLCVGDQYEICMKYGRQRWKLRGRIESSGKQVWDSEETVFLPLLTEFLSIKVTELKGLANHVVVGSVSCETKDLFAALPQVVAVDINDLGTIKLSLEVIWSPFDKDDQPSAASTVNKASTVTKRFSTYSQSPPDTPSLREQAFYNMLRRQEELENGTAWSLSSESSDDSSSPQLSGTARYSSTPKPLVQQPEPLPVQVTFRRPESLSSGSMDEEPPLTPALVNGHAPYSRTLSHISEASVDAALTEAMEAVDLKCPAPGPSPLVYPESTHVEHVSSVPPVADNGRSATSPALSTAGPAPTFIDPASSTQLDLVHKATDSGSSELPSITHTMASSTYSAVSPINSVPGLTSTTVGSTHKPMPSPLTSTGSIPSVTDSIQTTTSPTHTTPSPTHTTVSPTHSTPSPTHTTVSPSNAALSPSNATPSLSHSTTSPTQKATMSTHTTSAVGPVQTTTSPISTTVSPSPSVDTAIISSSSAVPSVPGPEARPCSHPTSTPYTKADPTAACTSSPSLASSGPKPLTSPAPDSLEQILKSPSSSPSSIVPEPQRSELSLALVAQAPVPEATGGAGDRRLEEALRTLMAALDDYRGQFPELQGLEQEVTRLESLLMQRQGLTRSRASSLSITVEHALESFSFLNDDEDEDNDSPGDRPTSSPEVVAEERLDSSNAQCLSTGCSALDATLVQHLYHCSCLLLKLGTFGPLRCQEAWALERLLREARVLQEVCEHSKLWGNAVTSAQEVVQFSASRPGFLTFWDQCTEGLNPFLCPVEQVLLTFCSQYGARLSLRQPGLAEAVCVKFLEDALGQKLPRRPHSGPGEQLTIFQFWSYVEVLDSPSMEAYVTETAEEVLLVQNLNSDDQAVVLKALRLAPEGRLRKDGLRALSSLLVHGNSKVMAAVSTQLRSLSLGPVFRERALLCFLDQLEDEDVQTRVAGCLALGCIKAPEGIEPLVYLCQTDTEAVREAARQSLQQCGEEGQSAHRQLEESLDALPCLFGPSSMASTAF</sequence>
<reference key="1">
    <citation type="journal article" date="2004" name="Nature">
        <title>Genome sequence of the Brown Norway rat yields insights into mammalian evolution.</title>
        <authorList>
            <person name="Gibbs R.A."/>
            <person name="Weinstock G.M."/>
            <person name="Metzker M.L."/>
            <person name="Muzny D.M."/>
            <person name="Sodergren E.J."/>
            <person name="Scherer S."/>
            <person name="Scott G."/>
            <person name="Steffen D."/>
            <person name="Worley K.C."/>
            <person name="Burch P.E."/>
            <person name="Okwuonu G."/>
            <person name="Hines S."/>
            <person name="Lewis L."/>
            <person name="Deramo C."/>
            <person name="Delgado O."/>
            <person name="Dugan-Rocha S."/>
            <person name="Miner G."/>
            <person name="Morgan M."/>
            <person name="Hawes A."/>
            <person name="Gill R."/>
            <person name="Holt R.A."/>
            <person name="Adams M.D."/>
            <person name="Amanatides P.G."/>
            <person name="Baden-Tillson H."/>
            <person name="Barnstead M."/>
            <person name="Chin S."/>
            <person name="Evans C.A."/>
            <person name="Ferriera S."/>
            <person name="Fosler C."/>
            <person name="Glodek A."/>
            <person name="Gu Z."/>
            <person name="Jennings D."/>
            <person name="Kraft C.L."/>
            <person name="Nguyen T."/>
            <person name="Pfannkoch C.M."/>
            <person name="Sitter C."/>
            <person name="Sutton G.G."/>
            <person name="Venter J.C."/>
            <person name="Woodage T."/>
            <person name="Smith D."/>
            <person name="Lee H.-M."/>
            <person name="Gustafson E."/>
            <person name="Cahill P."/>
            <person name="Kana A."/>
            <person name="Doucette-Stamm L."/>
            <person name="Weinstock K."/>
            <person name="Fechtel K."/>
            <person name="Weiss R.B."/>
            <person name="Dunn D.M."/>
            <person name="Green E.D."/>
            <person name="Blakesley R.W."/>
            <person name="Bouffard G.G."/>
            <person name="De Jong P.J."/>
            <person name="Osoegawa K."/>
            <person name="Zhu B."/>
            <person name="Marra M."/>
            <person name="Schein J."/>
            <person name="Bosdet I."/>
            <person name="Fjell C."/>
            <person name="Jones S."/>
            <person name="Krzywinski M."/>
            <person name="Mathewson C."/>
            <person name="Siddiqui A."/>
            <person name="Wye N."/>
            <person name="McPherson J."/>
            <person name="Zhao S."/>
            <person name="Fraser C.M."/>
            <person name="Shetty J."/>
            <person name="Shatsman S."/>
            <person name="Geer K."/>
            <person name="Chen Y."/>
            <person name="Abramzon S."/>
            <person name="Nierman W.C."/>
            <person name="Havlak P.H."/>
            <person name="Chen R."/>
            <person name="Durbin K.J."/>
            <person name="Egan A."/>
            <person name="Ren Y."/>
            <person name="Song X.-Z."/>
            <person name="Li B."/>
            <person name="Liu Y."/>
            <person name="Qin X."/>
            <person name="Cawley S."/>
            <person name="Cooney A.J."/>
            <person name="D'Souza L.M."/>
            <person name="Martin K."/>
            <person name="Wu J.Q."/>
            <person name="Gonzalez-Garay M.L."/>
            <person name="Jackson A.R."/>
            <person name="Kalafus K.J."/>
            <person name="McLeod M.P."/>
            <person name="Milosavljevic A."/>
            <person name="Virk D."/>
            <person name="Volkov A."/>
            <person name="Wheeler D.A."/>
            <person name="Zhang Z."/>
            <person name="Bailey J.A."/>
            <person name="Eichler E.E."/>
            <person name="Tuzun E."/>
            <person name="Birney E."/>
            <person name="Mongin E."/>
            <person name="Ureta-Vidal A."/>
            <person name="Woodwark C."/>
            <person name="Zdobnov E."/>
            <person name="Bork P."/>
            <person name="Suyama M."/>
            <person name="Torrents D."/>
            <person name="Alexandersson M."/>
            <person name="Trask B.J."/>
            <person name="Young J.M."/>
            <person name="Huang H."/>
            <person name="Wang H."/>
            <person name="Xing H."/>
            <person name="Daniels S."/>
            <person name="Gietzen D."/>
            <person name="Schmidt J."/>
            <person name="Stevens K."/>
            <person name="Vitt U."/>
            <person name="Wingrove J."/>
            <person name="Camara F."/>
            <person name="Mar Alba M."/>
            <person name="Abril J.F."/>
            <person name="Guigo R."/>
            <person name="Smit A."/>
            <person name="Dubchak I."/>
            <person name="Rubin E.M."/>
            <person name="Couronne O."/>
            <person name="Poliakov A."/>
            <person name="Huebner N."/>
            <person name="Ganten D."/>
            <person name="Goesele C."/>
            <person name="Hummel O."/>
            <person name="Kreitler T."/>
            <person name="Lee Y.-A."/>
            <person name="Monti J."/>
            <person name="Schulz H."/>
            <person name="Zimdahl H."/>
            <person name="Himmelbauer H."/>
            <person name="Lehrach H."/>
            <person name="Jacob H.J."/>
            <person name="Bromberg S."/>
            <person name="Gullings-Handley J."/>
            <person name="Jensen-Seaman M.I."/>
            <person name="Kwitek A.E."/>
            <person name="Lazar J."/>
            <person name="Pasko D."/>
            <person name="Tonellato P.J."/>
            <person name="Twigger S."/>
            <person name="Ponting C.P."/>
            <person name="Duarte J.M."/>
            <person name="Rice S."/>
            <person name="Goodstadt L."/>
            <person name="Beatson S.A."/>
            <person name="Emes R.D."/>
            <person name="Winter E.E."/>
            <person name="Webber C."/>
            <person name="Brandt P."/>
            <person name="Nyakatura G."/>
            <person name="Adetobi M."/>
            <person name="Chiaromonte F."/>
            <person name="Elnitski L."/>
            <person name="Eswara P."/>
            <person name="Hardison R.C."/>
            <person name="Hou M."/>
            <person name="Kolbe D."/>
            <person name="Makova K."/>
            <person name="Miller W."/>
            <person name="Nekrutenko A."/>
            <person name="Riemer C."/>
            <person name="Schwartz S."/>
            <person name="Taylor J."/>
            <person name="Yang S."/>
            <person name="Zhang Y."/>
            <person name="Lindpaintner K."/>
            <person name="Andrews T.D."/>
            <person name="Caccamo M."/>
            <person name="Clamp M."/>
            <person name="Clarke L."/>
            <person name="Curwen V."/>
            <person name="Durbin R.M."/>
            <person name="Eyras E."/>
            <person name="Searle S.M."/>
            <person name="Cooper G.M."/>
            <person name="Batzoglou S."/>
            <person name="Brudno M."/>
            <person name="Sidow A."/>
            <person name="Stone E.A."/>
            <person name="Payseur B.A."/>
            <person name="Bourque G."/>
            <person name="Lopez-Otin C."/>
            <person name="Puente X.S."/>
            <person name="Chakrabarti K."/>
            <person name="Chatterji S."/>
            <person name="Dewey C."/>
            <person name="Pachter L."/>
            <person name="Bray N."/>
            <person name="Yap V.B."/>
            <person name="Caspi A."/>
            <person name="Tesler G."/>
            <person name="Pevzner P.A."/>
            <person name="Haussler D."/>
            <person name="Roskin K.M."/>
            <person name="Baertsch R."/>
            <person name="Clawson H."/>
            <person name="Furey T.S."/>
            <person name="Hinrichs A.S."/>
            <person name="Karolchik D."/>
            <person name="Kent W.J."/>
            <person name="Rosenbloom K.R."/>
            <person name="Trumbower H."/>
            <person name="Weirauch M."/>
            <person name="Cooper D.N."/>
            <person name="Stenson P.D."/>
            <person name="Ma B."/>
            <person name="Brent M."/>
            <person name="Arumugam M."/>
            <person name="Shteynberg D."/>
            <person name="Copley R.R."/>
            <person name="Taylor M.S."/>
            <person name="Riethman H."/>
            <person name="Mudunuri U."/>
            <person name="Peterson J."/>
            <person name="Guyer M."/>
            <person name="Felsenfeld A."/>
            <person name="Old S."/>
            <person name="Mockrin S."/>
            <person name="Collins F.S."/>
        </authorList>
    </citation>
    <scope>NUCLEOTIDE SEQUENCE [LARGE SCALE GENOMIC DNA]</scope>
    <source>
        <strain>Brown Norway</strain>
    </source>
</reference>
<reference key="2">
    <citation type="journal article" date="2004" name="Genome Res.">
        <title>The status, quality, and expansion of the NIH full-length cDNA project: the Mammalian Gene Collection (MGC).</title>
        <authorList>
            <consortium name="The MGC Project Team"/>
        </authorList>
    </citation>
    <scope>NUCLEOTIDE SEQUENCE [LARGE SCALE MRNA] OF 303-1217</scope>
    <source>
        <tissue>Placenta</tissue>
    </source>
</reference>
<reference key="3">
    <citation type="journal article" date="2012" name="Nat. Commun.">
        <title>Quantitative maps of protein phosphorylation sites across 14 different rat organs and tissues.</title>
        <authorList>
            <person name="Lundby A."/>
            <person name="Secher A."/>
            <person name="Lage K."/>
            <person name="Nordsborg N.B."/>
            <person name="Dmytriyev A."/>
            <person name="Lundby C."/>
            <person name="Olsen J.V."/>
        </authorList>
    </citation>
    <scope>PHOSPHORYLATION [LARGE SCALE ANALYSIS] AT SER-22; SER-347; SER-452; SER-455 AND SER-742</scope>
    <scope>IDENTIFICATION BY MASS SPECTROMETRY [LARGE SCALE ANALYSIS]</scope>
</reference>
<organism>
    <name type="scientific">Rattus norvegicus</name>
    <name type="common">Rat</name>
    <dbReference type="NCBI Taxonomy" id="10116"/>
    <lineage>
        <taxon>Eukaryota</taxon>
        <taxon>Metazoa</taxon>
        <taxon>Chordata</taxon>
        <taxon>Craniata</taxon>
        <taxon>Vertebrata</taxon>
        <taxon>Euteleostomi</taxon>
        <taxon>Mammalia</taxon>
        <taxon>Eutheria</taxon>
        <taxon>Euarchontoglires</taxon>
        <taxon>Glires</taxon>
        <taxon>Rodentia</taxon>
        <taxon>Myomorpha</taxon>
        <taxon>Muroidea</taxon>
        <taxon>Muridae</taxon>
        <taxon>Murinae</taxon>
        <taxon>Rattus</taxon>
    </lineage>
</organism>
<name>RIPR1_RAT</name>
<protein>
    <recommendedName>
        <fullName evidence="6">Rho family-interacting cell polarization regulator 1</fullName>
    </recommendedName>
</protein>
<dbReference type="EMBL" id="AABR03114145">
    <property type="status" value="NOT_ANNOTATED_CDS"/>
    <property type="molecule type" value="Genomic_DNA"/>
</dbReference>
<dbReference type="EMBL" id="BC099098">
    <property type="protein sequence ID" value="AAH99098.1"/>
    <property type="molecule type" value="mRNA"/>
</dbReference>
<dbReference type="RefSeq" id="NP_001094130.1">
    <property type="nucleotide sequence ID" value="NM_001100660.1"/>
</dbReference>
<dbReference type="SMR" id="Q4FZU8"/>
<dbReference type="FunCoup" id="Q4FZU8">
    <property type="interactions" value="1153"/>
</dbReference>
<dbReference type="STRING" id="10116.ENSRNOP00000069592"/>
<dbReference type="GlyGen" id="Q4FZU8">
    <property type="glycosylation" value="1 site"/>
</dbReference>
<dbReference type="iPTMnet" id="Q4FZU8"/>
<dbReference type="PhosphoSitePlus" id="Q4FZU8"/>
<dbReference type="jPOST" id="Q4FZU8"/>
<dbReference type="PaxDb" id="10116-ENSRNOP00000023710"/>
<dbReference type="Ensembl" id="ENSRNOT00000023710.7">
    <property type="protein sequence ID" value="ENSRNOP00000023710.5"/>
    <property type="gene ID" value="ENSRNOG00000017604.7"/>
</dbReference>
<dbReference type="GeneID" id="291974"/>
<dbReference type="KEGG" id="rno:291974"/>
<dbReference type="UCSC" id="RGD:1307772">
    <property type="organism name" value="rat"/>
</dbReference>
<dbReference type="AGR" id="RGD:1307772"/>
<dbReference type="CTD" id="79567"/>
<dbReference type="RGD" id="1307772">
    <property type="gene designation" value="Ripor1"/>
</dbReference>
<dbReference type="eggNOG" id="ENOG502QQ7T">
    <property type="taxonomic scope" value="Eukaryota"/>
</dbReference>
<dbReference type="GeneTree" id="ENSGT00940000153717"/>
<dbReference type="HOGENOM" id="CLU_006211_0_0_1"/>
<dbReference type="InParanoid" id="Q4FZU8"/>
<dbReference type="PhylomeDB" id="Q4FZU8"/>
<dbReference type="TreeFam" id="TF329332"/>
<dbReference type="PRO" id="PR:Q4FZU8"/>
<dbReference type="Proteomes" id="UP000002494">
    <property type="component" value="Chromosome 19"/>
</dbReference>
<dbReference type="Bgee" id="ENSRNOG00000017604">
    <property type="expression patterns" value="Expressed in thymus and 19 other cell types or tissues"/>
</dbReference>
<dbReference type="ExpressionAtlas" id="Q4FZU8">
    <property type="expression patterns" value="baseline and differential"/>
</dbReference>
<dbReference type="GO" id="GO:0005737">
    <property type="term" value="C:cytoplasm"/>
    <property type="evidence" value="ECO:0000250"/>
    <property type="project" value="UniProtKB"/>
</dbReference>
<dbReference type="GO" id="GO:0005794">
    <property type="term" value="C:Golgi apparatus"/>
    <property type="evidence" value="ECO:0000250"/>
    <property type="project" value="UniProtKB"/>
</dbReference>
<dbReference type="GO" id="GO:0016020">
    <property type="term" value="C:membrane"/>
    <property type="evidence" value="ECO:0000250"/>
    <property type="project" value="UniProtKB"/>
</dbReference>
<dbReference type="GO" id="GO:0071889">
    <property type="term" value="F:14-3-3 protein binding"/>
    <property type="evidence" value="ECO:0000250"/>
    <property type="project" value="UniProtKB"/>
</dbReference>
<dbReference type="GO" id="GO:0009267">
    <property type="term" value="P:cellular response to starvation"/>
    <property type="evidence" value="ECO:0000250"/>
    <property type="project" value="UniProtKB"/>
</dbReference>
<dbReference type="GO" id="GO:0051683">
    <property type="term" value="P:establishment of Golgi localization"/>
    <property type="evidence" value="ECO:0000250"/>
    <property type="project" value="UniProtKB"/>
</dbReference>
<dbReference type="GO" id="GO:0030335">
    <property type="term" value="P:positive regulation of cell migration"/>
    <property type="evidence" value="ECO:0000250"/>
    <property type="project" value="UniProtKB"/>
</dbReference>
<dbReference type="GO" id="GO:0090316">
    <property type="term" value="P:positive regulation of intracellular protein transport"/>
    <property type="evidence" value="ECO:0000250"/>
    <property type="project" value="UniProtKB"/>
</dbReference>
<dbReference type="GO" id="GO:0034067">
    <property type="term" value="P:protein localization to Golgi apparatus"/>
    <property type="evidence" value="ECO:0000250"/>
    <property type="project" value="UniProtKB"/>
</dbReference>
<dbReference type="GO" id="GO:0009611">
    <property type="term" value="P:response to wounding"/>
    <property type="evidence" value="ECO:0000250"/>
    <property type="project" value="UniProtKB"/>
</dbReference>
<dbReference type="GO" id="GO:0007266">
    <property type="term" value="P:Rho protein signal transduction"/>
    <property type="evidence" value="ECO:0000250"/>
    <property type="project" value="UniProtKB"/>
</dbReference>
<dbReference type="FunFam" id="1.25.10.10:FF:000089">
    <property type="entry name" value="Rho family-interacting cell polarization regulator 1"/>
    <property type="match status" value="1"/>
</dbReference>
<dbReference type="Gene3D" id="1.25.10.10">
    <property type="entry name" value="Leucine-rich Repeat Variant"/>
    <property type="match status" value="1"/>
</dbReference>
<dbReference type="InterPro" id="IPR011989">
    <property type="entry name" value="ARM-like"/>
</dbReference>
<dbReference type="InterPro" id="IPR016024">
    <property type="entry name" value="ARM-type_fold"/>
</dbReference>
<dbReference type="InterPro" id="IPR031780">
    <property type="entry name" value="FAM65_N"/>
</dbReference>
<dbReference type="InterPro" id="IPR026136">
    <property type="entry name" value="RIPOR3"/>
</dbReference>
<dbReference type="PANTHER" id="PTHR15829">
    <property type="entry name" value="PROTEIN KINASE PKN/PRK1, EFFECTOR"/>
    <property type="match status" value="1"/>
</dbReference>
<dbReference type="PANTHER" id="PTHR15829:SF1">
    <property type="entry name" value="RHO FAMILY-INTERACTING CELL POLARIZATION REGULATOR 1"/>
    <property type="match status" value="1"/>
</dbReference>
<dbReference type="Pfam" id="PF15903">
    <property type="entry name" value="PL48"/>
    <property type="match status" value="1"/>
</dbReference>
<dbReference type="SUPFAM" id="SSF48371">
    <property type="entry name" value="ARM repeat"/>
    <property type="match status" value="1"/>
</dbReference>
<comment type="function">
    <text evidence="2">Downstream effector protein for Rho-type small GTPases that plays a role in cell polarity and directional migration. Acts as an adapter protein, linking active Rho proteins to STK24 and STK26 kinases, and hence positively regulates Golgi reorientation in polarized cell migration upon Rho activation. Involved in the subcellular relocation of STK26 from the Golgi to cytoplasm punctae in a Rho- and PDCD10-dependent manner upon serum stimulation.</text>
</comment>
<comment type="subunit">
    <text evidence="2">Interacts (via N-terminus) with RHOA (GTP-bound form); this interaction links active RHOA to STK24 and STK26 kinases. Interacts with RHOB. Interacts with RHOC. Interacts (via C-terminus) with PDCD10; this interaction occurs in a Rho-independent manner. Interacts (via C-terminus) with STK24; this interaction occurs in a PDCD10-dependent and Rho-independent manner. Interacts (via C-terminus) with STK26; this interaction occurs in a PDCD10-dependent and Rho-independent manner. Interacts (via N-terminus) with 14-3-3 proteins; these interactions occur in a Rho-dependent manner.</text>
</comment>
<comment type="subcellular location">
    <subcellularLocation>
        <location evidence="2">Cytoplasm</location>
    </subcellularLocation>
    <subcellularLocation>
        <location evidence="2">Golgi apparatus</location>
    </subcellularLocation>
    <text evidence="1 2">Localizes to the podocyte major processes and cell body. Colocalized with STK26 in the Golgi of serum-starved cells and relocated to cytoplasmic punctae, probably vesicular compartments, along with STK26 upon serum stimulation in a Rho- and PDCD10-dependent manner.</text>
</comment>
<comment type="similarity">
    <text evidence="5">Belongs to the RIPOR family.</text>
</comment>
<evidence type="ECO:0000250" key="1">
    <source>
        <dbReference type="UniProtKB" id="Q68FE6"/>
    </source>
</evidence>
<evidence type="ECO:0000250" key="2">
    <source>
        <dbReference type="UniProtKB" id="Q6ZS17"/>
    </source>
</evidence>
<evidence type="ECO:0000255" key="3"/>
<evidence type="ECO:0000256" key="4">
    <source>
        <dbReference type="SAM" id="MobiDB-lite"/>
    </source>
</evidence>
<evidence type="ECO:0000305" key="5"/>
<evidence type="ECO:0000312" key="6">
    <source>
        <dbReference type="RGD" id="1307772"/>
    </source>
</evidence>
<evidence type="ECO:0007744" key="7">
    <source>
    </source>
</evidence>